<dbReference type="EC" id="3.2.1.8"/>
<dbReference type="EMBL" id="X07723">
    <property type="protein sequence ID" value="CAA30553.1"/>
    <property type="molecule type" value="Genomic_DNA"/>
</dbReference>
<dbReference type="PIR" id="S01734">
    <property type="entry name" value="S01734"/>
</dbReference>
<dbReference type="PDB" id="1BCX">
    <property type="method" value="X-ray"/>
    <property type="resolution" value="1.81 A"/>
    <property type="chains" value="A=29-213"/>
</dbReference>
<dbReference type="PDB" id="1BVV">
    <property type="method" value="X-ray"/>
    <property type="resolution" value="1.80 A"/>
    <property type="chains" value="A=29-213"/>
</dbReference>
<dbReference type="PDB" id="1C5H">
    <property type="method" value="X-ray"/>
    <property type="resolution" value="1.55 A"/>
    <property type="chains" value="A=29-213"/>
</dbReference>
<dbReference type="PDB" id="1C5I">
    <property type="method" value="X-ray"/>
    <property type="resolution" value="1.80 A"/>
    <property type="chains" value="A=29-213"/>
</dbReference>
<dbReference type="PDB" id="1HV0">
    <property type="method" value="X-ray"/>
    <property type="resolution" value="1.60 A"/>
    <property type="chains" value="A=29-213"/>
</dbReference>
<dbReference type="PDB" id="1HV1">
    <property type="method" value="X-ray"/>
    <property type="resolution" value="1.80 A"/>
    <property type="chains" value="A=29-213"/>
</dbReference>
<dbReference type="PDB" id="1XNB">
    <property type="method" value="X-ray"/>
    <property type="resolution" value="1.49 A"/>
    <property type="chains" value="A=29-213"/>
</dbReference>
<dbReference type="PDB" id="1XNC">
    <property type="method" value="X-ray"/>
    <property type="resolution" value="1.60 A"/>
    <property type="chains" value="A=29-213"/>
</dbReference>
<dbReference type="PDB" id="2BVV">
    <property type="method" value="X-ray"/>
    <property type="resolution" value="1.50 A"/>
    <property type="chains" value="A=29-213"/>
</dbReference>
<dbReference type="PDB" id="3LB9">
    <property type="method" value="X-ray"/>
    <property type="resolution" value="3.00 A"/>
    <property type="chains" value="A/B/C=29-213"/>
</dbReference>
<dbReference type="PDB" id="3VZJ">
    <property type="method" value="X-ray"/>
    <property type="resolution" value="2.41 A"/>
    <property type="chains" value="A/B/C/D=29-213"/>
</dbReference>
<dbReference type="PDB" id="3VZK">
    <property type="method" value="X-ray"/>
    <property type="resolution" value="1.55 A"/>
    <property type="chains" value="A/B=29-213"/>
</dbReference>
<dbReference type="PDB" id="3VZL">
    <property type="method" value="X-ray"/>
    <property type="resolution" value="2.00 A"/>
    <property type="chains" value="A/B/C/D=29-213"/>
</dbReference>
<dbReference type="PDB" id="3VZM">
    <property type="method" value="X-ray"/>
    <property type="resolution" value="1.86 A"/>
    <property type="chains" value="A=29-213"/>
</dbReference>
<dbReference type="PDB" id="3VZN">
    <property type="method" value="X-ray"/>
    <property type="resolution" value="1.67 A"/>
    <property type="chains" value="A/B=29-213"/>
</dbReference>
<dbReference type="PDB" id="3VZO">
    <property type="method" value="X-ray"/>
    <property type="resolution" value="1.73 A"/>
    <property type="chains" value="A=29-213"/>
</dbReference>
<dbReference type="PDB" id="7VUG">
    <property type="method" value="EM"/>
    <property type="resolution" value="3.20 A"/>
    <property type="chains" value="R=29-213"/>
</dbReference>
<dbReference type="PDB" id="7VUH">
    <property type="method" value="EM"/>
    <property type="resolution" value="3.22 A"/>
    <property type="chains" value="R=29-213"/>
</dbReference>
<dbReference type="PDB" id="7VUI">
    <property type="method" value="EM"/>
    <property type="resolution" value="3.30 A"/>
    <property type="chains" value="R=29-213"/>
</dbReference>
<dbReference type="PDB" id="7VUJ">
    <property type="method" value="EM"/>
    <property type="resolution" value="3.80 A"/>
    <property type="chains" value="R=29-213"/>
</dbReference>
<dbReference type="PDB" id="7XN9">
    <property type="method" value="X-ray"/>
    <property type="resolution" value="2.60 A"/>
    <property type="chains" value="A=29-213"/>
</dbReference>
<dbReference type="PDB" id="7XNA">
    <property type="method" value="X-ray"/>
    <property type="resolution" value="2.65 A"/>
    <property type="chains" value="A=29-213"/>
</dbReference>
<dbReference type="PDB" id="8QXY">
    <property type="method" value="X-ray"/>
    <property type="resolution" value="1.41 A"/>
    <property type="chains" value="A/B=29-213"/>
</dbReference>
<dbReference type="PDB" id="8QXZ">
    <property type="method" value="X-ray"/>
    <property type="resolution" value="1.50 A"/>
    <property type="chains" value="A/B=29-213"/>
</dbReference>
<dbReference type="PDB" id="8QY0">
    <property type="method" value="X-ray"/>
    <property type="resolution" value="1.90 A"/>
    <property type="chains" value="A/B=29-213"/>
</dbReference>
<dbReference type="PDB" id="8QY1">
    <property type="method" value="X-ray"/>
    <property type="resolution" value="1.90 A"/>
    <property type="chains" value="A/B=29-213"/>
</dbReference>
<dbReference type="PDB" id="8QY2">
    <property type="method" value="X-ray"/>
    <property type="resolution" value="1.70 A"/>
    <property type="chains" value="A=29-213"/>
</dbReference>
<dbReference type="PDB" id="8QY3">
    <property type="method" value="X-ray"/>
    <property type="resolution" value="1.24 A"/>
    <property type="chains" value="A=29-213"/>
</dbReference>
<dbReference type="PDB" id="8R85">
    <property type="method" value="X-ray"/>
    <property type="resolution" value="1.30 A"/>
    <property type="chains" value="A=29-213"/>
</dbReference>
<dbReference type="PDB" id="8R86">
    <property type="method" value="X-ray"/>
    <property type="resolution" value="1.50 A"/>
    <property type="chains" value="A/B=29-213"/>
</dbReference>
<dbReference type="PDBsum" id="1BCX"/>
<dbReference type="PDBsum" id="1BVV"/>
<dbReference type="PDBsum" id="1C5H"/>
<dbReference type="PDBsum" id="1C5I"/>
<dbReference type="PDBsum" id="1HV0"/>
<dbReference type="PDBsum" id="1HV1"/>
<dbReference type="PDBsum" id="1XNB"/>
<dbReference type="PDBsum" id="1XNC"/>
<dbReference type="PDBsum" id="2BVV"/>
<dbReference type="PDBsum" id="3LB9"/>
<dbReference type="PDBsum" id="3VZJ"/>
<dbReference type="PDBsum" id="3VZK"/>
<dbReference type="PDBsum" id="3VZL"/>
<dbReference type="PDBsum" id="3VZM"/>
<dbReference type="PDBsum" id="3VZN"/>
<dbReference type="PDBsum" id="3VZO"/>
<dbReference type="PDBsum" id="7VUG"/>
<dbReference type="PDBsum" id="7VUH"/>
<dbReference type="PDBsum" id="7VUI"/>
<dbReference type="PDBsum" id="7VUJ"/>
<dbReference type="PDBsum" id="7XN9"/>
<dbReference type="PDBsum" id="7XNA"/>
<dbReference type="PDBsum" id="8QXY"/>
<dbReference type="PDBsum" id="8QXZ"/>
<dbReference type="PDBsum" id="8QY0"/>
<dbReference type="PDBsum" id="8QY1"/>
<dbReference type="PDBsum" id="8QY2"/>
<dbReference type="PDBsum" id="8QY3"/>
<dbReference type="PDBsum" id="8R85"/>
<dbReference type="PDBsum" id="8R86"/>
<dbReference type="BMRB" id="P09850"/>
<dbReference type="SMR" id="P09850"/>
<dbReference type="DrugBank" id="DB03389">
    <property type="generic name" value="alpha-D-Xylopyranose"/>
</dbReference>
<dbReference type="CAZy" id="GH11">
    <property type="family name" value="Glycoside Hydrolase Family 11"/>
</dbReference>
<dbReference type="BRENDA" id="3.2.1.8">
    <property type="organism ID" value="649"/>
</dbReference>
<dbReference type="SABIO-RK" id="P09850"/>
<dbReference type="UniPathway" id="UPA00114"/>
<dbReference type="EvolutionaryTrace" id="P09850"/>
<dbReference type="GO" id="GO:0031176">
    <property type="term" value="F:endo-1,4-beta-xylanase activity"/>
    <property type="evidence" value="ECO:0007669"/>
    <property type="project" value="UniProtKB-EC"/>
</dbReference>
<dbReference type="GO" id="GO:0045493">
    <property type="term" value="P:xylan catabolic process"/>
    <property type="evidence" value="ECO:0007669"/>
    <property type="project" value="UniProtKB-UniPathway"/>
</dbReference>
<dbReference type="FunFam" id="2.60.120.180:FF:000001">
    <property type="entry name" value="Endo-1,4-beta-xylanase"/>
    <property type="match status" value="1"/>
</dbReference>
<dbReference type="Gene3D" id="2.60.120.180">
    <property type="match status" value="1"/>
</dbReference>
<dbReference type="InterPro" id="IPR013320">
    <property type="entry name" value="ConA-like_dom_sf"/>
</dbReference>
<dbReference type="InterPro" id="IPR013319">
    <property type="entry name" value="GH11/12"/>
</dbReference>
<dbReference type="InterPro" id="IPR018208">
    <property type="entry name" value="GH11_AS_1"/>
</dbReference>
<dbReference type="InterPro" id="IPR033119">
    <property type="entry name" value="GH11_AS_2"/>
</dbReference>
<dbReference type="InterPro" id="IPR033123">
    <property type="entry name" value="GH11_dom"/>
</dbReference>
<dbReference type="InterPro" id="IPR001137">
    <property type="entry name" value="Glyco_hydro_11"/>
</dbReference>
<dbReference type="PANTHER" id="PTHR46828">
    <property type="entry name" value="ENDO-1,4-BETA-XYLANASE A-RELATED"/>
    <property type="match status" value="1"/>
</dbReference>
<dbReference type="PANTHER" id="PTHR46828:SF2">
    <property type="entry name" value="ENDO-1,4-BETA-XYLANASE A-RELATED"/>
    <property type="match status" value="1"/>
</dbReference>
<dbReference type="Pfam" id="PF00457">
    <property type="entry name" value="Glyco_hydro_11"/>
    <property type="match status" value="1"/>
</dbReference>
<dbReference type="PRINTS" id="PR00911">
    <property type="entry name" value="GLHYDRLASE11"/>
</dbReference>
<dbReference type="SUPFAM" id="SSF49899">
    <property type="entry name" value="Concanavalin A-like lectins/glucanases"/>
    <property type="match status" value="1"/>
</dbReference>
<dbReference type="PROSITE" id="PS00776">
    <property type="entry name" value="GH11_1"/>
    <property type="match status" value="1"/>
</dbReference>
<dbReference type="PROSITE" id="PS00777">
    <property type="entry name" value="GH11_2"/>
    <property type="match status" value="1"/>
</dbReference>
<dbReference type="PROSITE" id="PS51761">
    <property type="entry name" value="GH11_3"/>
    <property type="match status" value="1"/>
</dbReference>
<sequence length="213" mass="23359">MFKFKKNFLVGLSAALMSISLFSATASAASTDYWQNWTDGGGIVNAVNGSGGNYSVNWSNTGNFVVGKGWTTGSPFRTINYNAGVWAPNGNGYLTLYGWTRSPLIEYYVVDSWGTYRPTGTYKGTVKSDGGTYDIYTTTRYNAPSIDGDRTTFTQYWSVRQSKRPTGSNATITFTNHVNAWKSHGMNLGSNWAYQVMATEGYQSSGSSNVTVW</sequence>
<organism>
    <name type="scientific">Niallia circulans</name>
    <name type="common">Bacillus circulans</name>
    <dbReference type="NCBI Taxonomy" id="1397"/>
    <lineage>
        <taxon>Bacteria</taxon>
        <taxon>Bacillati</taxon>
        <taxon>Bacillota</taxon>
        <taxon>Bacilli</taxon>
        <taxon>Bacillales</taxon>
        <taxon>Bacillaceae</taxon>
        <taxon>Niallia</taxon>
    </lineage>
</organism>
<protein>
    <recommendedName>
        <fullName>Endo-1,4-beta-xylanase</fullName>
        <shortName>Xylanase</shortName>
        <ecNumber>3.2.1.8</ecNumber>
    </recommendedName>
    <alternativeName>
        <fullName>1,4-beta-D-xylan xylanohydrolase</fullName>
    </alternativeName>
</protein>
<gene>
    <name type="primary">xlnA</name>
</gene>
<proteinExistence type="evidence at protein level"/>
<evidence type="ECO:0000255" key="1">
    <source>
        <dbReference type="PROSITE-ProRule" id="PRU01097"/>
    </source>
</evidence>
<evidence type="ECO:0000255" key="2">
    <source>
        <dbReference type="PROSITE-ProRule" id="PRU10062"/>
    </source>
</evidence>
<evidence type="ECO:0000255" key="3">
    <source>
        <dbReference type="PROSITE-ProRule" id="PRU10063"/>
    </source>
</evidence>
<evidence type="ECO:0000269" key="4">
    <source>
    </source>
</evidence>
<evidence type="ECO:0000269" key="5">
    <source>
    </source>
</evidence>
<evidence type="ECO:0000305" key="6"/>
<evidence type="ECO:0007829" key="7">
    <source>
        <dbReference type="PDB" id="1XNB"/>
    </source>
</evidence>
<evidence type="ECO:0007829" key="8">
    <source>
        <dbReference type="PDB" id="3LB9"/>
    </source>
</evidence>
<evidence type="ECO:0007829" key="9">
    <source>
        <dbReference type="PDB" id="8QY3"/>
    </source>
</evidence>
<reference key="1">
    <citation type="journal article" date="1988" name="Nucleic Acids Res.">
        <title>Nucleotide sequence of a Bacillus circulans xylanase gene.</title>
        <authorList>
            <person name="Yang R.C.A."/>
            <person name="MacKenzie C.R."/>
            <person name="Narang S.A."/>
        </authorList>
    </citation>
    <scope>NUCLEOTIDE SEQUENCE [GENOMIC DNA]</scope>
</reference>
<reference key="2">
    <citation type="journal article" date="1994" name="Protein Sci.">
        <title>Mutational and crystallographic analyses of the active site residues of the Bacillus circulans xylanase.</title>
        <authorList>
            <person name="Wakarchuk W.W."/>
            <person name="Campbell R.L."/>
            <person name="Sung W.L."/>
            <person name="Davoodi J."/>
            <person name="Yaguchi M."/>
        </authorList>
    </citation>
    <scope>X-RAY CRYSTALLOGRAPHY (1.8 ANGSTROMS)</scope>
    <scope>MUTAGENESIS</scope>
</reference>
<reference key="3">
    <citation type="journal article" date="1996" name="Biochemistry">
        <title>The pKa of the general acid/base carboxyl group of a glycosidase cycles during catalysis: a 13C-NMR study of Bacillus circulans xylanase.</title>
        <authorList>
            <person name="McIntosh L.P."/>
            <person name="Hand G."/>
            <person name="Johnson P.E."/>
            <person name="Joshi M.D."/>
            <person name="Koerner M."/>
            <person name="Plesniak L.A."/>
            <person name="Ziser L."/>
            <person name="Wakarchuk W.W."/>
            <person name="Withers S.G."/>
        </authorList>
    </citation>
    <scope>STRUCTURE BY NMR</scope>
</reference>
<feature type="signal peptide">
    <location>
        <begin position="1"/>
        <end position="28"/>
    </location>
</feature>
<feature type="chain" id="PRO_0000007996" description="Endo-1,4-beta-xylanase" evidence="4">
    <location>
        <begin position="29"/>
        <end position="213"/>
    </location>
</feature>
<feature type="domain" description="GH11" evidence="1">
    <location>
        <begin position="29"/>
        <end position="213"/>
    </location>
</feature>
<feature type="active site" description="Nucleophile" evidence="2 5">
    <location>
        <position position="106"/>
    </location>
</feature>
<feature type="active site" description="Proton donor" evidence="3 5">
    <location>
        <position position="200"/>
    </location>
</feature>
<feature type="strand" evidence="8">
    <location>
        <begin position="23"/>
        <end position="26"/>
    </location>
</feature>
<feature type="strand" evidence="9">
    <location>
        <begin position="33"/>
        <end position="38"/>
    </location>
</feature>
<feature type="strand" evidence="9">
    <location>
        <begin position="42"/>
        <end position="48"/>
    </location>
</feature>
<feature type="strand" evidence="9">
    <location>
        <begin position="53"/>
        <end position="60"/>
    </location>
</feature>
<feature type="strand" evidence="9">
    <location>
        <begin position="62"/>
        <end position="72"/>
    </location>
</feature>
<feature type="strand" evidence="9">
    <location>
        <begin position="78"/>
        <end position="101"/>
    </location>
</feature>
<feature type="turn" evidence="9">
    <location>
        <begin position="102"/>
        <end position="104"/>
    </location>
</feature>
<feature type="strand" evidence="9">
    <location>
        <begin position="105"/>
        <end position="115"/>
    </location>
</feature>
<feature type="strand" evidence="9">
    <location>
        <begin position="121"/>
        <end position="128"/>
    </location>
</feature>
<feature type="strand" evidence="9">
    <location>
        <begin position="131"/>
        <end position="144"/>
    </location>
</feature>
<feature type="strand" evidence="9">
    <location>
        <begin position="148"/>
        <end position="162"/>
    </location>
</feature>
<feature type="strand" evidence="7">
    <location>
        <begin position="166"/>
        <end position="168"/>
    </location>
</feature>
<feature type="strand" evidence="9">
    <location>
        <begin position="170"/>
        <end position="173"/>
    </location>
</feature>
<feature type="helix" evidence="9">
    <location>
        <begin position="174"/>
        <end position="183"/>
    </location>
</feature>
<feature type="strand" evidence="9">
    <location>
        <begin position="190"/>
        <end position="213"/>
    </location>
</feature>
<keyword id="KW-0002">3D-structure</keyword>
<keyword id="KW-0119">Carbohydrate metabolism</keyword>
<keyword id="KW-0326">Glycosidase</keyword>
<keyword id="KW-0378">Hydrolase</keyword>
<keyword id="KW-0624">Polysaccharide degradation</keyword>
<keyword id="KW-0732">Signal</keyword>
<keyword id="KW-0858">Xylan degradation</keyword>
<accession>P09850</accession>
<name>XYNA_NIACI</name>
<comment type="catalytic activity">
    <reaction>
        <text>Endohydrolysis of (1-&gt;4)-beta-D-xylosidic linkages in xylans.</text>
        <dbReference type="EC" id="3.2.1.8"/>
    </reaction>
</comment>
<comment type="pathway">
    <text>Glycan degradation; xylan degradation.</text>
</comment>
<comment type="similarity">
    <text evidence="6">Belongs to the glycosyl hydrolase 11 (cellulase G) family.</text>
</comment>